<dbReference type="EC" id="1.2.1.41" evidence="1"/>
<dbReference type="EMBL" id="CP001052">
    <property type="protein sequence ID" value="ACD17768.1"/>
    <property type="molecule type" value="Genomic_DNA"/>
</dbReference>
<dbReference type="RefSeq" id="WP_012434332.1">
    <property type="nucleotide sequence ID" value="NC_010681.1"/>
</dbReference>
<dbReference type="SMR" id="B2SYN3"/>
<dbReference type="STRING" id="398527.Bphyt_3377"/>
<dbReference type="KEGG" id="bpy:Bphyt_3377"/>
<dbReference type="eggNOG" id="COG0014">
    <property type="taxonomic scope" value="Bacteria"/>
</dbReference>
<dbReference type="HOGENOM" id="CLU_030231_0_0_4"/>
<dbReference type="OrthoDB" id="9809970at2"/>
<dbReference type="UniPathway" id="UPA00098">
    <property type="reaction ID" value="UER00360"/>
</dbReference>
<dbReference type="Proteomes" id="UP000001739">
    <property type="component" value="Chromosome 1"/>
</dbReference>
<dbReference type="GO" id="GO:0005737">
    <property type="term" value="C:cytoplasm"/>
    <property type="evidence" value="ECO:0007669"/>
    <property type="project" value="UniProtKB-SubCell"/>
</dbReference>
<dbReference type="GO" id="GO:0004350">
    <property type="term" value="F:glutamate-5-semialdehyde dehydrogenase activity"/>
    <property type="evidence" value="ECO:0007669"/>
    <property type="project" value="UniProtKB-UniRule"/>
</dbReference>
<dbReference type="GO" id="GO:0050661">
    <property type="term" value="F:NADP binding"/>
    <property type="evidence" value="ECO:0007669"/>
    <property type="project" value="InterPro"/>
</dbReference>
<dbReference type="GO" id="GO:0055129">
    <property type="term" value="P:L-proline biosynthetic process"/>
    <property type="evidence" value="ECO:0007669"/>
    <property type="project" value="UniProtKB-UniRule"/>
</dbReference>
<dbReference type="CDD" id="cd07079">
    <property type="entry name" value="ALDH_F18-19_ProA-GPR"/>
    <property type="match status" value="1"/>
</dbReference>
<dbReference type="FunFam" id="3.40.309.10:FF:000006">
    <property type="entry name" value="Gamma-glutamyl phosphate reductase"/>
    <property type="match status" value="1"/>
</dbReference>
<dbReference type="Gene3D" id="3.40.605.10">
    <property type="entry name" value="Aldehyde Dehydrogenase, Chain A, domain 1"/>
    <property type="match status" value="1"/>
</dbReference>
<dbReference type="Gene3D" id="3.40.309.10">
    <property type="entry name" value="Aldehyde Dehydrogenase, Chain A, domain 2"/>
    <property type="match status" value="1"/>
</dbReference>
<dbReference type="HAMAP" id="MF_00412">
    <property type="entry name" value="ProA"/>
    <property type="match status" value="1"/>
</dbReference>
<dbReference type="InterPro" id="IPR016161">
    <property type="entry name" value="Ald_DH/histidinol_DH"/>
</dbReference>
<dbReference type="InterPro" id="IPR016163">
    <property type="entry name" value="Ald_DH_C"/>
</dbReference>
<dbReference type="InterPro" id="IPR016162">
    <property type="entry name" value="Ald_DH_N"/>
</dbReference>
<dbReference type="InterPro" id="IPR015590">
    <property type="entry name" value="Aldehyde_DH_dom"/>
</dbReference>
<dbReference type="InterPro" id="IPR020593">
    <property type="entry name" value="G-glutamylP_reductase_CS"/>
</dbReference>
<dbReference type="InterPro" id="IPR012134">
    <property type="entry name" value="Glu-5-SA_DH"/>
</dbReference>
<dbReference type="InterPro" id="IPR000965">
    <property type="entry name" value="GPR_dom"/>
</dbReference>
<dbReference type="NCBIfam" id="NF001221">
    <property type="entry name" value="PRK00197.1"/>
    <property type="match status" value="1"/>
</dbReference>
<dbReference type="NCBIfam" id="TIGR00407">
    <property type="entry name" value="proA"/>
    <property type="match status" value="1"/>
</dbReference>
<dbReference type="PANTHER" id="PTHR11063:SF8">
    <property type="entry name" value="DELTA-1-PYRROLINE-5-CARBOXYLATE SYNTHASE"/>
    <property type="match status" value="1"/>
</dbReference>
<dbReference type="PANTHER" id="PTHR11063">
    <property type="entry name" value="GLUTAMATE SEMIALDEHYDE DEHYDROGENASE"/>
    <property type="match status" value="1"/>
</dbReference>
<dbReference type="Pfam" id="PF00171">
    <property type="entry name" value="Aldedh"/>
    <property type="match status" value="1"/>
</dbReference>
<dbReference type="PIRSF" id="PIRSF000151">
    <property type="entry name" value="GPR"/>
    <property type="match status" value="1"/>
</dbReference>
<dbReference type="SUPFAM" id="SSF53720">
    <property type="entry name" value="ALDH-like"/>
    <property type="match status" value="1"/>
</dbReference>
<dbReference type="PROSITE" id="PS01223">
    <property type="entry name" value="PROA"/>
    <property type="match status" value="1"/>
</dbReference>
<keyword id="KW-0028">Amino-acid biosynthesis</keyword>
<keyword id="KW-0963">Cytoplasm</keyword>
<keyword id="KW-0521">NADP</keyword>
<keyword id="KW-0560">Oxidoreductase</keyword>
<keyword id="KW-0641">Proline biosynthesis</keyword>
<name>PROA_PARPJ</name>
<comment type="function">
    <text evidence="1">Catalyzes the NADPH-dependent reduction of L-glutamate 5-phosphate into L-glutamate 5-semialdehyde and phosphate. The product spontaneously undergoes cyclization to form 1-pyrroline-5-carboxylate.</text>
</comment>
<comment type="catalytic activity">
    <reaction evidence="1">
        <text>L-glutamate 5-semialdehyde + phosphate + NADP(+) = L-glutamyl 5-phosphate + NADPH + H(+)</text>
        <dbReference type="Rhea" id="RHEA:19541"/>
        <dbReference type="ChEBI" id="CHEBI:15378"/>
        <dbReference type="ChEBI" id="CHEBI:43474"/>
        <dbReference type="ChEBI" id="CHEBI:57783"/>
        <dbReference type="ChEBI" id="CHEBI:58066"/>
        <dbReference type="ChEBI" id="CHEBI:58274"/>
        <dbReference type="ChEBI" id="CHEBI:58349"/>
        <dbReference type="EC" id="1.2.1.41"/>
    </reaction>
</comment>
<comment type="pathway">
    <text evidence="1">Amino-acid biosynthesis; L-proline biosynthesis; L-glutamate 5-semialdehyde from L-glutamate: step 2/2.</text>
</comment>
<comment type="subcellular location">
    <subcellularLocation>
        <location evidence="1">Cytoplasm</location>
    </subcellularLocation>
</comment>
<comment type="similarity">
    <text evidence="1">Belongs to the gamma-glutamyl phosphate reductase family.</text>
</comment>
<protein>
    <recommendedName>
        <fullName evidence="1">Gamma-glutamyl phosphate reductase</fullName>
        <shortName evidence="1">GPR</shortName>
        <ecNumber evidence="1">1.2.1.41</ecNumber>
    </recommendedName>
    <alternativeName>
        <fullName evidence="1">Glutamate-5-semialdehyde dehydrogenase</fullName>
    </alternativeName>
    <alternativeName>
        <fullName evidence="1">Glutamyl-gamma-semialdehyde dehydrogenase</fullName>
        <shortName evidence="1">GSA dehydrogenase</shortName>
    </alternativeName>
</protein>
<accession>B2SYN3</accession>
<organism>
    <name type="scientific">Paraburkholderia phytofirmans (strain DSM 17436 / LMG 22146 / PsJN)</name>
    <name type="common">Burkholderia phytofirmans</name>
    <dbReference type="NCBI Taxonomy" id="398527"/>
    <lineage>
        <taxon>Bacteria</taxon>
        <taxon>Pseudomonadati</taxon>
        <taxon>Pseudomonadota</taxon>
        <taxon>Betaproteobacteria</taxon>
        <taxon>Burkholderiales</taxon>
        <taxon>Burkholderiaceae</taxon>
        <taxon>Paraburkholderia</taxon>
    </lineage>
</organism>
<feature type="chain" id="PRO_1000193581" description="Gamma-glutamyl phosphate reductase">
    <location>
        <begin position="1"/>
        <end position="423"/>
    </location>
</feature>
<proteinExistence type="inferred from homology"/>
<gene>
    <name evidence="1" type="primary">proA</name>
    <name type="ordered locus">Bphyt_3377</name>
</gene>
<sequence>MDIDQYMTDLGRRARQASRAMARASTAAKNAALAAVAQGIERDAALLKEANARDVARAREKGHDAAFIDRLTLSDKALKTMVEGLRQVAALADPIGEISNLKYRPSGIQVGQMRVPLGVIGIIYESRPNVTIDAAALCLKSGNATILRGGSEALECNAALAKLIGEGLEKAGLPQEAVQVVATSDRAAVGKLITMTEYVDVIVPRGGKSLIERLMNEARVPMIKHLDGICHVYVDDRADLAKALTVCDNAKTHRYGTCNTMETLLVARGIAAEVLPPLGKLYRDKQVELRVDAAARAVLADAGVGPLVDATEEDWRTEYLAPVLAIKVVENLDAAIDHINTYSSQHTDAIVTEDHDRAMRFLREVDSASVMVNASTRFADGFEFGLGAEIGISNDKLHARGPVGLEGLTSLKYVVLGHGEGRQ</sequence>
<evidence type="ECO:0000255" key="1">
    <source>
        <dbReference type="HAMAP-Rule" id="MF_00412"/>
    </source>
</evidence>
<reference key="1">
    <citation type="journal article" date="2011" name="J. Bacteriol.">
        <title>Complete genome sequence of the plant growth-promoting endophyte Burkholderia phytofirmans strain PsJN.</title>
        <authorList>
            <person name="Weilharter A."/>
            <person name="Mitter B."/>
            <person name="Shin M.V."/>
            <person name="Chain P.S."/>
            <person name="Nowak J."/>
            <person name="Sessitsch A."/>
        </authorList>
    </citation>
    <scope>NUCLEOTIDE SEQUENCE [LARGE SCALE GENOMIC DNA]</scope>
    <source>
        <strain>DSM 17436 / LMG 22146 / PsJN</strain>
    </source>
</reference>